<keyword id="KW-0963">Cytoplasm</keyword>
<keyword id="KW-0312">Gluconeogenesis</keyword>
<keyword id="KW-0324">Glycolysis</keyword>
<keyword id="KW-0413">Isomerase</keyword>
<gene>
    <name evidence="1" type="primary">tpiA</name>
    <name type="ordered locus">SG2176</name>
</gene>
<organism>
    <name type="scientific">Sodalis glossinidius (strain morsitans)</name>
    <dbReference type="NCBI Taxonomy" id="343509"/>
    <lineage>
        <taxon>Bacteria</taxon>
        <taxon>Pseudomonadati</taxon>
        <taxon>Pseudomonadota</taxon>
        <taxon>Gammaproteobacteria</taxon>
        <taxon>Enterobacterales</taxon>
        <taxon>Bruguierivoracaceae</taxon>
        <taxon>Sodalis</taxon>
    </lineage>
</organism>
<reference key="1">
    <citation type="journal article" date="2006" name="Genome Res.">
        <title>Massive genome erosion and functional adaptations provide insights into the symbiotic lifestyle of Sodalis glossinidius in the tsetse host.</title>
        <authorList>
            <person name="Toh H."/>
            <person name="Weiss B.L."/>
            <person name="Perkin S.A.H."/>
            <person name="Yamashita A."/>
            <person name="Oshima K."/>
            <person name="Hattori M."/>
            <person name="Aksoy S."/>
        </authorList>
    </citation>
    <scope>NUCLEOTIDE SEQUENCE [LARGE SCALE GENOMIC DNA]</scope>
    <source>
        <strain>morsitans</strain>
    </source>
</reference>
<comment type="function">
    <text evidence="1">Involved in the gluconeogenesis. Catalyzes stereospecifically the conversion of dihydroxyacetone phosphate (DHAP) to D-glyceraldehyde-3-phosphate (G3P).</text>
</comment>
<comment type="catalytic activity">
    <reaction evidence="1">
        <text>D-glyceraldehyde 3-phosphate = dihydroxyacetone phosphate</text>
        <dbReference type="Rhea" id="RHEA:18585"/>
        <dbReference type="ChEBI" id="CHEBI:57642"/>
        <dbReference type="ChEBI" id="CHEBI:59776"/>
        <dbReference type="EC" id="5.3.1.1"/>
    </reaction>
</comment>
<comment type="pathway">
    <text evidence="1">Carbohydrate biosynthesis; gluconeogenesis.</text>
</comment>
<comment type="pathway">
    <text evidence="1">Carbohydrate degradation; glycolysis; D-glyceraldehyde 3-phosphate from glycerone phosphate: step 1/1.</text>
</comment>
<comment type="subunit">
    <text evidence="1">Homodimer.</text>
</comment>
<comment type="subcellular location">
    <subcellularLocation>
        <location evidence="1">Cytoplasm</location>
    </subcellularLocation>
</comment>
<comment type="similarity">
    <text evidence="1">Belongs to the triosephosphate isomerase family.</text>
</comment>
<feature type="chain" id="PRO_0000307564" description="Triosephosphate isomerase">
    <location>
        <begin position="1"/>
        <end position="255"/>
    </location>
</feature>
<feature type="active site" description="Electrophile" evidence="1">
    <location>
        <position position="95"/>
    </location>
</feature>
<feature type="active site" description="Proton acceptor" evidence="1">
    <location>
        <position position="167"/>
    </location>
</feature>
<feature type="binding site" evidence="1">
    <location>
        <begin position="9"/>
        <end position="11"/>
    </location>
    <ligand>
        <name>substrate</name>
    </ligand>
</feature>
<feature type="binding site" evidence="1">
    <location>
        <position position="173"/>
    </location>
    <ligand>
        <name>substrate</name>
    </ligand>
</feature>
<feature type="binding site" evidence="1">
    <location>
        <position position="212"/>
    </location>
    <ligand>
        <name>substrate</name>
    </ligand>
</feature>
<feature type="binding site" evidence="1">
    <location>
        <begin position="233"/>
        <end position="234"/>
    </location>
    <ligand>
        <name>substrate</name>
    </ligand>
</feature>
<accession>Q2NQX4</accession>
<dbReference type="EC" id="5.3.1.1" evidence="1"/>
<dbReference type="EMBL" id="AP008232">
    <property type="protein sequence ID" value="BAE75451.1"/>
    <property type="molecule type" value="Genomic_DNA"/>
</dbReference>
<dbReference type="RefSeq" id="WP_011411988.1">
    <property type="nucleotide sequence ID" value="NC_007712.1"/>
</dbReference>
<dbReference type="SMR" id="Q2NQX4"/>
<dbReference type="STRING" id="343509.SG2176"/>
<dbReference type="KEGG" id="sgl:SG2176"/>
<dbReference type="eggNOG" id="COG0149">
    <property type="taxonomic scope" value="Bacteria"/>
</dbReference>
<dbReference type="HOGENOM" id="CLU_024251_2_1_6"/>
<dbReference type="OrthoDB" id="9809429at2"/>
<dbReference type="BioCyc" id="SGLO343509:SGP1_RS20065-MONOMER"/>
<dbReference type="UniPathway" id="UPA00109">
    <property type="reaction ID" value="UER00189"/>
</dbReference>
<dbReference type="UniPathway" id="UPA00138"/>
<dbReference type="Proteomes" id="UP000001932">
    <property type="component" value="Chromosome"/>
</dbReference>
<dbReference type="GO" id="GO:0005829">
    <property type="term" value="C:cytosol"/>
    <property type="evidence" value="ECO:0007669"/>
    <property type="project" value="TreeGrafter"/>
</dbReference>
<dbReference type="GO" id="GO:0004807">
    <property type="term" value="F:triose-phosphate isomerase activity"/>
    <property type="evidence" value="ECO:0007669"/>
    <property type="project" value="UniProtKB-UniRule"/>
</dbReference>
<dbReference type="GO" id="GO:0006094">
    <property type="term" value="P:gluconeogenesis"/>
    <property type="evidence" value="ECO:0007669"/>
    <property type="project" value="UniProtKB-UniRule"/>
</dbReference>
<dbReference type="GO" id="GO:0046166">
    <property type="term" value="P:glyceraldehyde-3-phosphate biosynthetic process"/>
    <property type="evidence" value="ECO:0007669"/>
    <property type="project" value="TreeGrafter"/>
</dbReference>
<dbReference type="GO" id="GO:0019563">
    <property type="term" value="P:glycerol catabolic process"/>
    <property type="evidence" value="ECO:0007669"/>
    <property type="project" value="TreeGrafter"/>
</dbReference>
<dbReference type="GO" id="GO:0006096">
    <property type="term" value="P:glycolytic process"/>
    <property type="evidence" value="ECO:0007669"/>
    <property type="project" value="UniProtKB-UniRule"/>
</dbReference>
<dbReference type="CDD" id="cd00311">
    <property type="entry name" value="TIM"/>
    <property type="match status" value="1"/>
</dbReference>
<dbReference type="FunFam" id="3.20.20.70:FF:000020">
    <property type="entry name" value="Triosephosphate isomerase"/>
    <property type="match status" value="1"/>
</dbReference>
<dbReference type="Gene3D" id="3.20.20.70">
    <property type="entry name" value="Aldolase class I"/>
    <property type="match status" value="1"/>
</dbReference>
<dbReference type="HAMAP" id="MF_00147_B">
    <property type="entry name" value="TIM_B"/>
    <property type="match status" value="1"/>
</dbReference>
<dbReference type="InterPro" id="IPR013785">
    <property type="entry name" value="Aldolase_TIM"/>
</dbReference>
<dbReference type="InterPro" id="IPR035990">
    <property type="entry name" value="TIM_sf"/>
</dbReference>
<dbReference type="InterPro" id="IPR022896">
    <property type="entry name" value="TrioseP_Isoase_bac/euk"/>
</dbReference>
<dbReference type="InterPro" id="IPR000652">
    <property type="entry name" value="Triosephosphate_isomerase"/>
</dbReference>
<dbReference type="InterPro" id="IPR020861">
    <property type="entry name" value="Triosephosphate_isomerase_AS"/>
</dbReference>
<dbReference type="NCBIfam" id="TIGR00419">
    <property type="entry name" value="tim"/>
    <property type="match status" value="1"/>
</dbReference>
<dbReference type="PANTHER" id="PTHR21139">
    <property type="entry name" value="TRIOSEPHOSPHATE ISOMERASE"/>
    <property type="match status" value="1"/>
</dbReference>
<dbReference type="PANTHER" id="PTHR21139:SF42">
    <property type="entry name" value="TRIOSEPHOSPHATE ISOMERASE"/>
    <property type="match status" value="1"/>
</dbReference>
<dbReference type="Pfam" id="PF00121">
    <property type="entry name" value="TIM"/>
    <property type="match status" value="1"/>
</dbReference>
<dbReference type="SUPFAM" id="SSF51351">
    <property type="entry name" value="Triosephosphate isomerase (TIM)"/>
    <property type="match status" value="1"/>
</dbReference>
<dbReference type="PROSITE" id="PS00171">
    <property type="entry name" value="TIM_1"/>
    <property type="match status" value="1"/>
</dbReference>
<dbReference type="PROSITE" id="PS51440">
    <property type="entry name" value="TIM_2"/>
    <property type="match status" value="1"/>
</dbReference>
<name>TPIS_SODGM</name>
<protein>
    <recommendedName>
        <fullName evidence="1">Triosephosphate isomerase</fullName>
        <shortName evidence="1">TIM</shortName>
        <shortName evidence="1">TPI</shortName>
        <ecNumber evidence="1">5.3.1.1</ecNumber>
    </recommendedName>
    <alternativeName>
        <fullName evidence="1">Triose-phosphate isomerase</fullName>
    </alternativeName>
</protein>
<evidence type="ECO:0000255" key="1">
    <source>
        <dbReference type="HAMAP-Rule" id="MF_00147"/>
    </source>
</evidence>
<proteinExistence type="inferred from homology"/>
<sequence length="255" mass="27021">MRHPLVMGNWKLNGSKHMVNDLTAALRNELSSVVGCDVAIAPPVTYLELAKHHLGGSRIALGAQNVDTHLSGAYTGEVSAEMLKDIGAKYIIIGHSERRTYHKESDEFIAEKFAVLKEAELIPVLCIGESEAENEAGQTEAVCARQIDAVLNSLGAKAFENTVIAYEPIWAIGTGKSATPAQAQAVHKFIRDHIAKHDAAIAEQVIIQYGGSVNAANAAELFTQPDIDGALVGGASLKADAFAVIVKAAAEAKQS</sequence>